<sequence length="132" mass="14022">MEVLRYRSRPIVGGEAEGPAVVIDSLSFYGEVDPETGVTSGGKPLAGRVAAIRRSRGSTVGSYVIYALKENGVAPLAILMERAEPIVIAGCVLAGIPLYDGLPPEFFERVRDGYRVRVHSDGLVEVLGPGQP</sequence>
<proteinExistence type="evidence at protein level"/>
<keyword id="KW-0414">Isoprene biosynthesis</keyword>
<keyword id="KW-0456">Lyase</keyword>
<keyword id="KW-1185">Reference proteome</keyword>
<gene>
    <name evidence="10" type="ordered locus">APE_2089</name>
</gene>
<name>PMDHS_AERPE</name>
<comment type="function">
    <text evidence="3 4 5">Component of a hydro-lyase that catalyzes the dehydration of mevalonate 5-phosphate (MVA5P) to form trans-anhydromevalonate 5-phosphate (tAHMP) (PubMed:30224495, PubMed:36992929). Involved in the archaeal mevalonate (MVA) pathway, which provides fundamental precursors for isoprenoid biosynthesis, such as isopentenyl diphosphate (IPP) and dimethylallyl diphosphate (DMAPP) (PubMed:30224495, PubMed:31924615).</text>
</comment>
<comment type="catalytic activity">
    <reaction evidence="3 5">
        <text>(R)-5-phosphomevalonate = (2E)-3-methyl-5-phosphooxypent-2-enoate + H2O</text>
        <dbReference type="Rhea" id="RHEA:78975"/>
        <dbReference type="ChEBI" id="CHEBI:15377"/>
        <dbReference type="ChEBI" id="CHEBI:58146"/>
        <dbReference type="ChEBI" id="CHEBI:229665"/>
        <dbReference type="EC" id="4.2.1.182"/>
    </reaction>
    <physiologicalReaction direction="left-to-right" evidence="3">
        <dbReference type="Rhea" id="RHEA:78976"/>
    </physiologicalReaction>
</comment>
<comment type="activity regulation">
    <text evidence="5">Neither the addition of 1 mM Mg(2+) nor 1 mM Mn(2+) has a significant effect on the activity, whereas Zn(2+) causes almost complete inactivation (PubMed:36992929). Strongly inhibited by H(2)O(2), but not by EDTA or iodoacetamide (PubMed:36992929).</text>
</comment>
<comment type="biophysicochemical properties">
    <kinetics>
        <KM evidence="5">18.3 uM for tAHMP</KM>
        <text evidence="5">kcat is 15.2 sec(-1) with tAHMP as substrate.</text>
    </kinetics>
    <phDependence>
        <text evidence="5">Optimum pH is 7.0.</text>
    </phDependence>
    <temperatureDependence>
        <text evidence="5">Thermostable (PubMed:36992929). Treatment at 90 degrees Celsius causes a loss of most activity, and treatment at 100 degrees Celsius results in complete inactivation (PubMed:36992929).</text>
    </temperatureDependence>
</comment>
<comment type="pathway">
    <text evidence="4 9">Isoprenoid biosynthesis; isopentenyl diphosphate biosynthesis via mevalonate pathway.</text>
</comment>
<comment type="subunit">
    <text evidence="3 5">Heterodimer composed of a large subunit (PMDh-L) and a small subunit (PMDh-S).</text>
</comment>
<comment type="similarity">
    <text evidence="2 8">Belongs to the AcnX type II small subunit family.</text>
</comment>
<accession>Q9YA49</accession>
<dbReference type="EC" id="4.2.1.182" evidence="3 5"/>
<dbReference type="EMBL" id="BA000002">
    <property type="protein sequence ID" value="BAA81100.1"/>
    <property type="molecule type" value="Genomic_DNA"/>
</dbReference>
<dbReference type="PIR" id="D72514">
    <property type="entry name" value="D72514"/>
</dbReference>
<dbReference type="RefSeq" id="WP_010866788.1">
    <property type="nucleotide sequence ID" value="NC_000854.2"/>
</dbReference>
<dbReference type="SMR" id="Q9YA49"/>
<dbReference type="STRING" id="272557.APE_2089"/>
<dbReference type="EnsemblBacteria" id="BAA81100">
    <property type="protein sequence ID" value="BAA81100"/>
    <property type="gene ID" value="APE_2089"/>
</dbReference>
<dbReference type="GeneID" id="1445184"/>
<dbReference type="KEGG" id="ape:APE_2089"/>
<dbReference type="PATRIC" id="fig|272557.25.peg.1393"/>
<dbReference type="eggNOG" id="arCOG04279">
    <property type="taxonomic scope" value="Archaea"/>
</dbReference>
<dbReference type="BioCyc" id="MetaCyc:MONOMER-21120"/>
<dbReference type="UniPathway" id="UPA00057"/>
<dbReference type="Proteomes" id="UP000002518">
    <property type="component" value="Chromosome"/>
</dbReference>
<dbReference type="GO" id="GO:0016836">
    <property type="term" value="F:hydro-lyase activity"/>
    <property type="evidence" value="ECO:0007669"/>
    <property type="project" value="UniProtKB-UniRule"/>
</dbReference>
<dbReference type="GO" id="GO:0019287">
    <property type="term" value="P:isopentenyl diphosphate biosynthetic process, mevalonate pathway"/>
    <property type="evidence" value="ECO:0007669"/>
    <property type="project" value="UniProtKB-UniRule"/>
</dbReference>
<dbReference type="CDD" id="cd01356">
    <property type="entry name" value="AcnX_swivel"/>
    <property type="match status" value="1"/>
</dbReference>
<dbReference type="Gene3D" id="3.50.30.10">
    <property type="entry name" value="Phosphohistidine domain"/>
    <property type="match status" value="1"/>
</dbReference>
<dbReference type="HAMAP" id="MF_00078">
    <property type="entry name" value="PMDh_S"/>
    <property type="match status" value="1"/>
</dbReference>
<dbReference type="InterPro" id="IPR012016">
    <property type="entry name" value="PMDh-S-like"/>
</dbReference>
<dbReference type="InterPro" id="IPR002840">
    <property type="entry name" value="PMDh-S-like_dom"/>
</dbReference>
<dbReference type="InterPro" id="IPR020794">
    <property type="entry name" value="PMDh_S"/>
</dbReference>
<dbReference type="Pfam" id="PF01989">
    <property type="entry name" value="AcnX_swivel_put"/>
    <property type="match status" value="1"/>
</dbReference>
<dbReference type="PIRSF" id="PIRSF004966">
    <property type="entry name" value="UCP004966"/>
    <property type="match status" value="1"/>
</dbReference>
<dbReference type="SUPFAM" id="SSF52016">
    <property type="entry name" value="LeuD/IlvD-like"/>
    <property type="match status" value="1"/>
</dbReference>
<protein>
    <recommendedName>
        <fullName evidence="7">Phosphomevalonate dehydratase small subunit</fullName>
        <shortName evidence="7">PMDh small subunit</shortName>
        <shortName evidence="7">PMDh-S</shortName>
        <ecNumber evidence="3 5">4.2.1.182</ecNumber>
    </recommendedName>
    <alternativeName>
        <fullName evidence="6">ApeAcnX small subunit</fullName>
    </alternativeName>
    <alternativeName>
        <fullName evidence="6">Mevalonate 5-phosphate dehydratase small subunit</fullName>
        <shortName evidence="6">MVA5P dehydratase small subunit</shortName>
    </alternativeName>
</protein>
<feature type="chain" id="PRO_0000152562" description="Phosphomevalonate dehydratase small subunit">
    <location>
        <begin position="1"/>
        <end position="132"/>
    </location>
</feature>
<feature type="active site" description="Proton acceptor" evidence="1">
    <location>
        <position position="58"/>
    </location>
</feature>
<evidence type="ECO:0000250" key="1">
    <source>
        <dbReference type="UniProtKB" id="Q9I485"/>
    </source>
</evidence>
<evidence type="ECO:0000255" key="2">
    <source>
        <dbReference type="HAMAP-Rule" id="MF_00078"/>
    </source>
</evidence>
<evidence type="ECO:0000269" key="3">
    <source>
    </source>
</evidence>
<evidence type="ECO:0000269" key="4">
    <source>
    </source>
</evidence>
<evidence type="ECO:0000269" key="5">
    <source>
    </source>
</evidence>
<evidence type="ECO:0000303" key="6">
    <source>
    </source>
</evidence>
<evidence type="ECO:0000303" key="7">
    <source>
    </source>
</evidence>
<evidence type="ECO:0000305" key="8"/>
<evidence type="ECO:0000305" key="9">
    <source>
    </source>
</evidence>
<evidence type="ECO:0000312" key="10">
    <source>
        <dbReference type="EMBL" id="BAA81100.1"/>
    </source>
</evidence>
<reference key="1">
    <citation type="journal article" date="1999" name="DNA Res.">
        <title>Complete genome sequence of an aerobic hyper-thermophilic crenarchaeon, Aeropyrum pernix K1.</title>
        <authorList>
            <person name="Kawarabayasi Y."/>
            <person name="Hino Y."/>
            <person name="Horikawa H."/>
            <person name="Yamazaki S."/>
            <person name="Haikawa Y."/>
            <person name="Jin-no K."/>
            <person name="Takahashi M."/>
            <person name="Sekine M."/>
            <person name="Baba S."/>
            <person name="Ankai A."/>
            <person name="Kosugi H."/>
            <person name="Hosoyama A."/>
            <person name="Fukui S."/>
            <person name="Nagai Y."/>
            <person name="Nishijima K."/>
            <person name="Nakazawa H."/>
            <person name="Takamiya M."/>
            <person name="Masuda S."/>
            <person name="Funahashi T."/>
            <person name="Tanaka T."/>
            <person name="Kudoh Y."/>
            <person name="Yamazaki J."/>
            <person name="Kushida N."/>
            <person name="Oguchi A."/>
            <person name="Aoki K."/>
            <person name="Kubota K."/>
            <person name="Nakamura Y."/>
            <person name="Nomura N."/>
            <person name="Sako Y."/>
            <person name="Kikuchi H."/>
        </authorList>
    </citation>
    <scope>NUCLEOTIDE SEQUENCE [LARGE SCALE GENOMIC DNA]</scope>
    <source>
        <strain>ATCC 700893 / DSM 11879 / JCM 9820 / NBRC 100138 / K1</strain>
    </source>
</reference>
<reference key="2">
    <citation type="journal article" date="2018" name="Proc. Natl. Acad. Sci. U.S.A.">
        <title>Modified mevalonate pathway of the archaeon Aeropyrum pernix proceeds via trans-anhydromevalonate 5-phosphate.</title>
        <authorList>
            <person name="Hayakawa H."/>
            <person name="Motoyama K."/>
            <person name="Sobue F."/>
            <person name="Ito T."/>
            <person name="Kawaide H."/>
            <person name="Yoshimura T."/>
            <person name="Hemmi H."/>
        </authorList>
    </citation>
    <scope>FUNCTION</scope>
    <scope>CATALYTIC ACTIVITY</scope>
    <scope>PATHWAY</scope>
    <scope>SUBUNIT</scope>
</reference>
<reference key="3">
    <citation type="journal article" date="2020" name="Appl. Environ. Microbiol.">
        <title>Reconstruction of the 'Archaeal' Mevalonate Pathway from the Methanogenic Archaeon Methanosarcina mazei in Escherichia coli Cells.</title>
        <authorList>
            <person name="Yoshida R."/>
            <person name="Yoshimura T."/>
            <person name="Hemmi H."/>
        </authorList>
    </citation>
    <scope>FUNCTION</scope>
    <scope>PATHWAY</scope>
</reference>
<reference key="4">
    <citation type="journal article" date="2023" name="Front. Microbiol.">
        <title>A [4Fe-4S] cluster resides at the active center of phosphomevalonate dehydratase, a key enzyme in the archaeal modified mevalonate pathway.</title>
        <authorList>
            <person name="Komeyama M."/>
            <person name="Kanno K."/>
            <person name="Mino H."/>
            <person name="Yasuno Y."/>
            <person name="Shinada T."/>
            <person name="Ito T."/>
            <person name="Hemmi H."/>
        </authorList>
    </citation>
    <scope>FUNCTION</scope>
    <scope>CATALYTIC ACTIVITY</scope>
    <scope>ACTIVITY REGULATION</scope>
    <scope>BIOPHYSICOCHEMICAL PROPERTIES</scope>
    <scope>SUBUNIT</scope>
</reference>
<organism>
    <name type="scientific">Aeropyrum pernix (strain ATCC 700893 / DSM 11879 / JCM 9820 / NBRC 100138 / K1)</name>
    <dbReference type="NCBI Taxonomy" id="272557"/>
    <lineage>
        <taxon>Archaea</taxon>
        <taxon>Thermoproteota</taxon>
        <taxon>Thermoprotei</taxon>
        <taxon>Desulfurococcales</taxon>
        <taxon>Desulfurococcaceae</taxon>
        <taxon>Aeropyrum</taxon>
    </lineage>
</organism>